<name>DIVIB_LACLK</name>
<accession>D2BKM6</accession>
<dbReference type="EMBL" id="CP001834">
    <property type="protein sequence ID" value="ADA65332.1"/>
    <property type="molecule type" value="Genomic_DNA"/>
</dbReference>
<dbReference type="RefSeq" id="WP_012898205.1">
    <property type="nucleotide sequence ID" value="NC_013656.1"/>
</dbReference>
<dbReference type="KEGG" id="llk:LLKF_1738"/>
<dbReference type="HOGENOM" id="CLU_046278_1_1_9"/>
<dbReference type="GO" id="GO:0032153">
    <property type="term" value="C:cell division site"/>
    <property type="evidence" value="ECO:0007669"/>
    <property type="project" value="UniProtKB-UniRule"/>
</dbReference>
<dbReference type="GO" id="GO:0005886">
    <property type="term" value="C:plasma membrane"/>
    <property type="evidence" value="ECO:0007669"/>
    <property type="project" value="UniProtKB-SubCell"/>
</dbReference>
<dbReference type="GO" id="GO:0043093">
    <property type="term" value="P:FtsZ-dependent cytokinesis"/>
    <property type="evidence" value="ECO:0007669"/>
    <property type="project" value="UniProtKB-UniRule"/>
</dbReference>
<dbReference type="Gene3D" id="3.40.50.10960">
    <property type="match status" value="1"/>
</dbReference>
<dbReference type="HAMAP" id="MF_00912">
    <property type="entry name" value="DivIB"/>
    <property type="match status" value="1"/>
</dbReference>
<dbReference type="InterPro" id="IPR005548">
    <property type="entry name" value="Cell_div_FtsQ/DivIB_C"/>
</dbReference>
<dbReference type="InterPro" id="IPR026580">
    <property type="entry name" value="DivIB"/>
</dbReference>
<dbReference type="InterPro" id="IPR050487">
    <property type="entry name" value="FtsQ_DivIB"/>
</dbReference>
<dbReference type="InterPro" id="IPR034746">
    <property type="entry name" value="POTRA"/>
</dbReference>
<dbReference type="InterPro" id="IPR013685">
    <property type="entry name" value="POTRA_FtsQ_type"/>
</dbReference>
<dbReference type="PANTHER" id="PTHR37820">
    <property type="entry name" value="CELL DIVISION PROTEIN DIVIB"/>
    <property type="match status" value="1"/>
</dbReference>
<dbReference type="PANTHER" id="PTHR37820:SF1">
    <property type="entry name" value="CELL DIVISION PROTEIN FTSQ"/>
    <property type="match status" value="1"/>
</dbReference>
<dbReference type="Pfam" id="PF03799">
    <property type="entry name" value="FtsQ_DivIB_C"/>
    <property type="match status" value="1"/>
</dbReference>
<dbReference type="Pfam" id="PF08478">
    <property type="entry name" value="POTRA_1"/>
    <property type="match status" value="1"/>
</dbReference>
<dbReference type="PROSITE" id="PS51779">
    <property type="entry name" value="POTRA"/>
    <property type="match status" value="1"/>
</dbReference>
<gene>
    <name evidence="1" type="primary">divIB</name>
    <name type="synonym">ftsQ</name>
    <name type="ordered locus">LLKF_1738</name>
</gene>
<proteinExistence type="inferred from homology"/>
<sequence length="392" mass="43937">MSEKDNNLTPWQQKHLEYQKRKAEEAKKEKKANQPKKVHFSSPFLKSLPKTEKNFDDTRDEAESAELLEEGFETNNEETQSSEAPIENEKIIAQLEQLSQENEYEYEEEQIKRPSRFSSLFKGSAPLLKKMWPALAVVVLVFVGSLYLISPLSKISTFSVSGNANESSEQVALASGIQTSDSIFNILNNKEKIEATIEQKFPRISAVTINYHFPNRFEAIVKEHTNSVYVKRNNQTYLVLNNGYVITTPVDATKLEKLPVLQNFNDEEVKTFVNAYETLKPAIKSLMTNVTKTPTDATKDFIAIDMSDGNQVRVSLSQLADRLPYYPSVAKQVQAPQVVDMEAGIYTKPKAAYDAYLSQLSTSKSASISAQNAKKTDASSENTAQSTTTSSN</sequence>
<feature type="chain" id="PRO_0000414777" description="Cell division protein DivIB">
    <location>
        <begin position="1"/>
        <end position="392"/>
    </location>
</feature>
<feature type="topological domain" description="Cytoplasmic" evidence="1">
    <location>
        <begin position="1"/>
        <end position="131"/>
    </location>
</feature>
<feature type="transmembrane region" description="Helical" evidence="1">
    <location>
        <begin position="132"/>
        <end position="152"/>
    </location>
</feature>
<feature type="topological domain" description="Extracellular" evidence="1">
    <location>
        <begin position="153"/>
        <end position="392"/>
    </location>
</feature>
<feature type="domain" description="POTRA" evidence="2">
    <location>
        <begin position="153"/>
        <end position="224"/>
    </location>
</feature>
<feature type="region of interest" description="Disordered" evidence="3">
    <location>
        <begin position="1"/>
        <end position="88"/>
    </location>
</feature>
<feature type="region of interest" description="Disordered" evidence="3">
    <location>
        <begin position="368"/>
        <end position="392"/>
    </location>
</feature>
<feature type="compositionally biased region" description="Basic and acidic residues" evidence="3">
    <location>
        <begin position="14"/>
        <end position="32"/>
    </location>
</feature>
<feature type="compositionally biased region" description="Acidic residues" evidence="3">
    <location>
        <begin position="58"/>
        <end position="76"/>
    </location>
</feature>
<protein>
    <recommendedName>
        <fullName evidence="1">Cell division protein DivIB</fullName>
    </recommendedName>
</protein>
<reference key="1">
    <citation type="journal article" date="2008" name="Appl. Environ. Microbiol.">
        <title>Genome-scale genotype-phenotype matching of two Lactococcus lactis isolates from plants identifies mechanisms of adaptation to the plant niche.</title>
        <authorList>
            <person name="Siezen R.J."/>
            <person name="Starrenburg M.J."/>
            <person name="Boekhorst J."/>
            <person name="Renckens B."/>
            <person name="Molenaar D."/>
            <person name="van Hylckama Vlieg J.E."/>
        </authorList>
    </citation>
    <scope>NUCLEOTIDE SEQUENCE [LARGE SCALE GENOMIC DNA]</scope>
    <source>
        <strain>KF147</strain>
    </source>
</reference>
<comment type="function">
    <text evidence="1">Cell division protein that may be involved in stabilizing or promoting the assembly of the division complex.</text>
</comment>
<comment type="subcellular location">
    <subcellularLocation>
        <location evidence="1">Cell membrane</location>
        <topology evidence="1">Single-pass type II membrane protein</topology>
    </subcellularLocation>
    <text evidence="1">Localizes to the division septum.</text>
</comment>
<comment type="similarity">
    <text evidence="1">Belongs to the FtsQ/DivIB family. DivIB subfamily.</text>
</comment>
<keyword id="KW-0131">Cell cycle</keyword>
<keyword id="KW-0132">Cell division</keyword>
<keyword id="KW-1003">Cell membrane</keyword>
<keyword id="KW-0472">Membrane</keyword>
<keyword id="KW-0812">Transmembrane</keyword>
<keyword id="KW-1133">Transmembrane helix</keyword>
<evidence type="ECO:0000255" key="1">
    <source>
        <dbReference type="HAMAP-Rule" id="MF_00912"/>
    </source>
</evidence>
<evidence type="ECO:0000255" key="2">
    <source>
        <dbReference type="PROSITE-ProRule" id="PRU01115"/>
    </source>
</evidence>
<evidence type="ECO:0000256" key="3">
    <source>
        <dbReference type="SAM" id="MobiDB-lite"/>
    </source>
</evidence>
<organism>
    <name type="scientific">Lactococcus lactis subsp. lactis (strain KF147)</name>
    <dbReference type="NCBI Taxonomy" id="684738"/>
    <lineage>
        <taxon>Bacteria</taxon>
        <taxon>Bacillati</taxon>
        <taxon>Bacillota</taxon>
        <taxon>Bacilli</taxon>
        <taxon>Lactobacillales</taxon>
        <taxon>Streptococcaceae</taxon>
        <taxon>Lactococcus</taxon>
    </lineage>
</organism>